<dbReference type="EMBL" id="BC089703">
    <property type="protein sequence ID" value="AAH89703.1"/>
    <property type="molecule type" value="mRNA"/>
</dbReference>
<dbReference type="RefSeq" id="NP_001015764.1">
    <property type="nucleotide sequence ID" value="NM_001015764.1"/>
</dbReference>
<dbReference type="SMR" id="Q5EBF6"/>
<dbReference type="FunCoup" id="Q5EBF6">
    <property type="interactions" value="862"/>
</dbReference>
<dbReference type="STRING" id="8364.ENSXETP00000036312"/>
<dbReference type="PaxDb" id="8364-ENSXETP00000007710"/>
<dbReference type="DNASU" id="548481"/>
<dbReference type="GeneID" id="548481"/>
<dbReference type="KEGG" id="xtr:548481"/>
<dbReference type="AGR" id="Xenbase:XB-GENE-919853"/>
<dbReference type="CTD" id="6387"/>
<dbReference type="Xenbase" id="XB-GENE-919853">
    <property type="gene designation" value="cxcl12"/>
</dbReference>
<dbReference type="eggNOG" id="ENOG502S54U">
    <property type="taxonomic scope" value="Eukaryota"/>
</dbReference>
<dbReference type="InParanoid" id="Q5EBF6"/>
<dbReference type="OMA" id="IINRCKC"/>
<dbReference type="OrthoDB" id="9884353at2759"/>
<dbReference type="Proteomes" id="UP000008143">
    <property type="component" value="Chromosome 7"/>
</dbReference>
<dbReference type="Bgee" id="ENSXETG00000003570">
    <property type="expression patterns" value="Expressed in liver and 12 other cell types or tissues"/>
</dbReference>
<dbReference type="ExpressionAtlas" id="Q5EBF6">
    <property type="expression patterns" value="baseline"/>
</dbReference>
<dbReference type="GO" id="GO:0005615">
    <property type="term" value="C:extracellular space"/>
    <property type="evidence" value="ECO:0007669"/>
    <property type="project" value="UniProtKB-KW"/>
</dbReference>
<dbReference type="GO" id="GO:0008009">
    <property type="term" value="F:chemokine activity"/>
    <property type="evidence" value="ECO:0000250"/>
    <property type="project" value="UniProtKB"/>
</dbReference>
<dbReference type="GO" id="GO:0008083">
    <property type="term" value="F:growth factor activity"/>
    <property type="evidence" value="ECO:0007669"/>
    <property type="project" value="UniProtKB-KW"/>
</dbReference>
<dbReference type="GO" id="GO:0005178">
    <property type="term" value="F:integrin binding"/>
    <property type="evidence" value="ECO:0000250"/>
    <property type="project" value="UniProtKB"/>
</dbReference>
<dbReference type="GO" id="GO:0060326">
    <property type="term" value="P:cell chemotaxis"/>
    <property type="evidence" value="ECO:0000250"/>
    <property type="project" value="UniProtKB"/>
</dbReference>
<dbReference type="GO" id="GO:0006952">
    <property type="term" value="P:defense response"/>
    <property type="evidence" value="ECO:0007669"/>
    <property type="project" value="InterPro"/>
</dbReference>
<dbReference type="GO" id="GO:0007186">
    <property type="term" value="P:G protein-coupled receptor signaling pathway"/>
    <property type="evidence" value="ECO:0000250"/>
    <property type="project" value="UniProtKB"/>
</dbReference>
<dbReference type="GO" id="GO:0006955">
    <property type="term" value="P:immune response"/>
    <property type="evidence" value="ECO:0007669"/>
    <property type="project" value="InterPro"/>
</dbReference>
<dbReference type="GO" id="GO:0033622">
    <property type="term" value="P:integrin activation"/>
    <property type="evidence" value="ECO:0000250"/>
    <property type="project" value="UniProtKB"/>
</dbReference>
<dbReference type="GO" id="GO:0007509">
    <property type="term" value="P:mesoderm migration involved in gastrulation"/>
    <property type="evidence" value="ECO:0000250"/>
    <property type="project" value="UniProtKB"/>
</dbReference>
<dbReference type="CDD" id="cd00273">
    <property type="entry name" value="Chemokine_CXC"/>
    <property type="match status" value="1"/>
</dbReference>
<dbReference type="FunFam" id="2.40.50.40:FF:000010">
    <property type="entry name" value="Stromal cell-derived factor 1 precursor"/>
    <property type="match status" value="1"/>
</dbReference>
<dbReference type="Gene3D" id="2.40.50.40">
    <property type="match status" value="1"/>
</dbReference>
<dbReference type="InterPro" id="IPR039809">
    <property type="entry name" value="Chemokine_b/g/d"/>
</dbReference>
<dbReference type="InterPro" id="IPR001811">
    <property type="entry name" value="Chemokine_IL8-like_dom"/>
</dbReference>
<dbReference type="InterPro" id="IPR033899">
    <property type="entry name" value="CXC_Chemokine_domain"/>
</dbReference>
<dbReference type="InterPro" id="IPR036048">
    <property type="entry name" value="Interleukin_8-like_sf"/>
</dbReference>
<dbReference type="PANTHER" id="PTHR12015">
    <property type="entry name" value="SMALL INDUCIBLE CYTOKINE A"/>
    <property type="match status" value="1"/>
</dbReference>
<dbReference type="PANTHER" id="PTHR12015:SF193">
    <property type="entry name" value="STROMAL CELL-DERIVED FACTOR 1"/>
    <property type="match status" value="1"/>
</dbReference>
<dbReference type="Pfam" id="PF00048">
    <property type="entry name" value="IL8"/>
    <property type="match status" value="1"/>
</dbReference>
<dbReference type="SMART" id="SM00199">
    <property type="entry name" value="SCY"/>
    <property type="match status" value="1"/>
</dbReference>
<dbReference type="SUPFAM" id="SSF54117">
    <property type="entry name" value="Interleukin 8-like chemokines"/>
    <property type="match status" value="1"/>
</dbReference>
<sequence length="93" mass="10607">MDIRTLALFSILLGSLCLSEGKPVSLVYRCPCRYFESNVPKSNIKHLKILSTSNCSLQIVARLKHNGKQICLDPKTKWIQEYLEKALNKKVKT</sequence>
<proteinExistence type="inferred from homology"/>
<protein>
    <recommendedName>
        <fullName evidence="5">Stromal cell-derived factor 1</fullName>
        <shortName evidence="3">SDF-1</shortName>
    </recommendedName>
    <alternativeName>
        <fullName evidence="5">C-X-C motif chemokine 12</fullName>
    </alternativeName>
</protein>
<comment type="function">
    <text evidence="2 3">Chemoattractant. Activates the C-X-C chemokine receptor cxcr4 to induce a rapid and transient rise in the level of intracellular calcium ions, and chemotaxis. Signaling with cxcr4 mediates the directional movement of mesodermal cells during gastrulation. Binds to the allosteric site (site 2) of integrins and activates them in a cxcr4-independent manner.</text>
</comment>
<comment type="subunit">
    <text evidence="1">Monomer or homodimer; in equilibrium. Dimer formation is induced by non acidic pH and the presence of multivalent anions, and by binding to cxcr4 or heparin (By similarity).</text>
</comment>
<comment type="subcellular location">
    <subcellularLocation>
        <location evidence="1">Secreted</location>
    </subcellularLocation>
</comment>
<comment type="similarity">
    <text evidence="4">Belongs to the intercrine alpha (chemokine CxC) family.</text>
</comment>
<evidence type="ECO:0000250" key="1"/>
<evidence type="ECO:0000250" key="2">
    <source>
        <dbReference type="UniProtKB" id="P48061"/>
    </source>
</evidence>
<evidence type="ECO:0000250" key="3">
    <source>
        <dbReference type="UniProtKB" id="Q8UUJ9"/>
    </source>
</evidence>
<evidence type="ECO:0000255" key="4"/>
<evidence type="ECO:0000312" key="5">
    <source>
        <dbReference type="EMBL" id="AAH89703.1"/>
    </source>
</evidence>
<accession>Q5EBF6</accession>
<reference evidence="5" key="1">
    <citation type="submission" date="2005-02" db="EMBL/GenBank/DDBJ databases">
        <authorList>
            <consortium name="NIH - Xenopus Gene Collection (XGC) project"/>
        </authorList>
    </citation>
    <scope>NUCLEOTIDE SEQUENCE [LARGE SCALE MRNA]</scope>
    <source>
        <strain evidence="5">F6</strain>
    </source>
</reference>
<gene>
    <name evidence="5" type="primary">cxcl12</name>
    <name evidence="3" type="synonym">sdf1</name>
</gene>
<keyword id="KW-0145">Chemotaxis</keyword>
<keyword id="KW-0202">Cytokine</keyword>
<keyword id="KW-0217">Developmental protein</keyword>
<keyword id="KW-1015">Disulfide bond</keyword>
<keyword id="KW-0306">Gastrulation</keyword>
<keyword id="KW-0339">Growth factor</keyword>
<keyword id="KW-1185">Reference proteome</keyword>
<keyword id="KW-0964">Secreted</keyword>
<keyword id="KW-0732">Signal</keyword>
<name>SDF1_XENTR</name>
<feature type="signal peptide" evidence="4">
    <location>
        <begin position="1"/>
        <end position="21"/>
    </location>
</feature>
<feature type="chain" id="PRO_0000378621" description="Stromal cell-derived factor 1" evidence="4">
    <location>
        <begin position="22"/>
        <end position="93"/>
    </location>
</feature>
<feature type="region of interest" description="Receptor and heparin binding" evidence="1">
    <location>
        <begin position="29"/>
        <end position="33"/>
    </location>
</feature>
<feature type="region of interest" description="Receptor binding" evidence="1">
    <location>
        <begin position="48"/>
        <end position="50"/>
    </location>
</feature>
<feature type="region of interest" description="Receptor binding" evidence="1">
    <location>
        <begin position="60"/>
        <end position="64"/>
    </location>
</feature>
<feature type="short sequence motif" description="Receptor activation motif" evidence="1">
    <location>
        <begin position="22"/>
        <end position="23"/>
    </location>
</feature>
<feature type="binding site" evidence="1">
    <location>
        <begin position="41"/>
        <end position="51"/>
    </location>
    <ligand>
        <name>heparin</name>
        <dbReference type="ChEBI" id="CHEBI:28304"/>
    </ligand>
</feature>
<feature type="binding site" evidence="1">
    <location>
        <position position="62"/>
    </location>
    <ligand>
        <name>heparin</name>
        <dbReference type="ChEBI" id="CHEBI:28304"/>
    </ligand>
</feature>
<feature type="binding site" evidence="1">
    <location>
        <position position="69"/>
    </location>
    <ligand>
        <name>heparin</name>
        <dbReference type="ChEBI" id="CHEBI:28304"/>
    </ligand>
</feature>
<feature type="binding site" evidence="1">
    <location>
        <position position="85"/>
    </location>
    <ligand>
        <name>heparin</name>
        <dbReference type="ChEBI" id="CHEBI:28304"/>
    </ligand>
</feature>
<feature type="site" description="Important for integrin interaction and activation" evidence="2">
    <location>
        <position position="45"/>
    </location>
</feature>
<feature type="site" description="Important for dimer formation" evidence="1">
    <location>
        <position position="46"/>
    </location>
</feature>
<feature type="site" description="Important for integrin interaction and activation" evidence="2">
    <location>
        <position position="48"/>
    </location>
</feature>
<feature type="site" description="Important for integrin interaction and activation" evidence="2">
    <location>
        <position position="64"/>
    </location>
</feature>
<feature type="disulfide bond" evidence="2">
    <location>
        <begin position="30"/>
        <end position="55"/>
    </location>
</feature>
<feature type="disulfide bond" evidence="2">
    <location>
        <begin position="32"/>
        <end position="71"/>
    </location>
</feature>
<organism>
    <name type="scientific">Xenopus tropicalis</name>
    <name type="common">Western clawed frog</name>
    <name type="synonym">Silurana tropicalis</name>
    <dbReference type="NCBI Taxonomy" id="8364"/>
    <lineage>
        <taxon>Eukaryota</taxon>
        <taxon>Metazoa</taxon>
        <taxon>Chordata</taxon>
        <taxon>Craniata</taxon>
        <taxon>Vertebrata</taxon>
        <taxon>Euteleostomi</taxon>
        <taxon>Amphibia</taxon>
        <taxon>Batrachia</taxon>
        <taxon>Anura</taxon>
        <taxon>Pipoidea</taxon>
        <taxon>Pipidae</taxon>
        <taxon>Xenopodinae</taxon>
        <taxon>Xenopus</taxon>
        <taxon>Silurana</taxon>
    </lineage>
</organism>